<proteinExistence type="inferred from homology"/>
<feature type="chain" id="PRO_0000376142" description="NADH-quinone oxidoreductase subunit B">
    <location>
        <begin position="1"/>
        <end position="197"/>
    </location>
</feature>
<feature type="binding site" evidence="1">
    <location>
        <position position="63"/>
    </location>
    <ligand>
        <name>[4Fe-4S] cluster</name>
        <dbReference type="ChEBI" id="CHEBI:49883"/>
    </ligand>
</feature>
<feature type="binding site" evidence="1">
    <location>
        <position position="64"/>
    </location>
    <ligand>
        <name>[4Fe-4S] cluster</name>
        <dbReference type="ChEBI" id="CHEBI:49883"/>
    </ligand>
</feature>
<feature type="binding site" evidence="1">
    <location>
        <position position="129"/>
    </location>
    <ligand>
        <name>[4Fe-4S] cluster</name>
        <dbReference type="ChEBI" id="CHEBI:49883"/>
    </ligand>
</feature>
<feature type="binding site" evidence="1">
    <location>
        <position position="159"/>
    </location>
    <ligand>
        <name>[4Fe-4S] cluster</name>
        <dbReference type="ChEBI" id="CHEBI:49883"/>
    </ligand>
</feature>
<dbReference type="EC" id="7.1.1.-" evidence="1"/>
<dbReference type="EMBL" id="AE015928">
    <property type="protein sequence ID" value="AAO79171.1"/>
    <property type="molecule type" value="Genomic_DNA"/>
</dbReference>
<dbReference type="RefSeq" id="NP_812977.1">
    <property type="nucleotide sequence ID" value="NC_004663.1"/>
</dbReference>
<dbReference type="RefSeq" id="WP_011109092.1">
    <property type="nucleotide sequence ID" value="NC_004663.1"/>
</dbReference>
<dbReference type="SMR" id="Q8A0F5"/>
<dbReference type="FunCoup" id="Q8A0F5">
    <property type="interactions" value="328"/>
</dbReference>
<dbReference type="STRING" id="226186.BT_4066"/>
<dbReference type="PaxDb" id="226186-BT_4066"/>
<dbReference type="EnsemblBacteria" id="AAO79171">
    <property type="protein sequence ID" value="AAO79171"/>
    <property type="gene ID" value="BT_4066"/>
</dbReference>
<dbReference type="GeneID" id="60925241"/>
<dbReference type="KEGG" id="bth:BT_4066"/>
<dbReference type="PATRIC" id="fig|226186.12.peg.4131"/>
<dbReference type="eggNOG" id="COG0377">
    <property type="taxonomic scope" value="Bacteria"/>
</dbReference>
<dbReference type="HOGENOM" id="CLU_055737_7_2_10"/>
<dbReference type="InParanoid" id="Q8A0F5"/>
<dbReference type="OrthoDB" id="9786737at2"/>
<dbReference type="Proteomes" id="UP000001414">
    <property type="component" value="Chromosome"/>
</dbReference>
<dbReference type="GO" id="GO:0005886">
    <property type="term" value="C:plasma membrane"/>
    <property type="evidence" value="ECO:0007669"/>
    <property type="project" value="UniProtKB-SubCell"/>
</dbReference>
<dbReference type="GO" id="GO:0045271">
    <property type="term" value="C:respiratory chain complex I"/>
    <property type="evidence" value="ECO:0000318"/>
    <property type="project" value="GO_Central"/>
</dbReference>
<dbReference type="GO" id="GO:0051539">
    <property type="term" value="F:4 iron, 4 sulfur cluster binding"/>
    <property type="evidence" value="ECO:0007669"/>
    <property type="project" value="UniProtKB-KW"/>
</dbReference>
<dbReference type="GO" id="GO:0005506">
    <property type="term" value="F:iron ion binding"/>
    <property type="evidence" value="ECO:0007669"/>
    <property type="project" value="UniProtKB-UniRule"/>
</dbReference>
<dbReference type="GO" id="GO:0008137">
    <property type="term" value="F:NADH dehydrogenase (ubiquinone) activity"/>
    <property type="evidence" value="ECO:0000318"/>
    <property type="project" value="GO_Central"/>
</dbReference>
<dbReference type="GO" id="GO:0050136">
    <property type="term" value="F:NADH:ubiquinone reductase (non-electrogenic) activity"/>
    <property type="evidence" value="ECO:0007669"/>
    <property type="project" value="UniProtKB-UniRule"/>
</dbReference>
<dbReference type="GO" id="GO:0048038">
    <property type="term" value="F:quinone binding"/>
    <property type="evidence" value="ECO:0007669"/>
    <property type="project" value="UniProtKB-KW"/>
</dbReference>
<dbReference type="GO" id="GO:0009060">
    <property type="term" value="P:aerobic respiration"/>
    <property type="evidence" value="ECO:0000318"/>
    <property type="project" value="GO_Central"/>
</dbReference>
<dbReference type="GO" id="GO:0015990">
    <property type="term" value="P:electron transport coupled proton transport"/>
    <property type="evidence" value="ECO:0000318"/>
    <property type="project" value="GO_Central"/>
</dbReference>
<dbReference type="FunFam" id="3.40.50.12280:FF:000002">
    <property type="entry name" value="NADH-quinone oxidoreductase subunit B"/>
    <property type="match status" value="1"/>
</dbReference>
<dbReference type="Gene3D" id="3.40.50.12280">
    <property type="match status" value="1"/>
</dbReference>
<dbReference type="HAMAP" id="MF_01356">
    <property type="entry name" value="NDH1_NuoB"/>
    <property type="match status" value="1"/>
</dbReference>
<dbReference type="InterPro" id="IPR006137">
    <property type="entry name" value="NADH_UbQ_OxRdtase-like_20kDa"/>
</dbReference>
<dbReference type="InterPro" id="IPR006138">
    <property type="entry name" value="NADH_UQ_OxRdtase_20Kd_su"/>
</dbReference>
<dbReference type="NCBIfam" id="TIGR01957">
    <property type="entry name" value="nuoB_fam"/>
    <property type="match status" value="1"/>
</dbReference>
<dbReference type="NCBIfam" id="NF005012">
    <property type="entry name" value="PRK06411.1"/>
    <property type="match status" value="1"/>
</dbReference>
<dbReference type="NCBIfam" id="NF011391">
    <property type="entry name" value="PRK14816.1"/>
    <property type="match status" value="1"/>
</dbReference>
<dbReference type="PANTHER" id="PTHR11995">
    <property type="entry name" value="NADH DEHYDROGENASE"/>
    <property type="match status" value="1"/>
</dbReference>
<dbReference type="PANTHER" id="PTHR11995:SF14">
    <property type="entry name" value="NADH DEHYDROGENASE [UBIQUINONE] IRON-SULFUR PROTEIN 7, MITOCHONDRIAL"/>
    <property type="match status" value="1"/>
</dbReference>
<dbReference type="Pfam" id="PF01058">
    <property type="entry name" value="Oxidored_q6"/>
    <property type="match status" value="1"/>
</dbReference>
<dbReference type="SUPFAM" id="SSF56770">
    <property type="entry name" value="HydA/Nqo6-like"/>
    <property type="match status" value="1"/>
</dbReference>
<dbReference type="PROSITE" id="PS01150">
    <property type="entry name" value="COMPLEX1_20K"/>
    <property type="match status" value="1"/>
</dbReference>
<gene>
    <name evidence="1" type="primary">nuoB</name>
    <name type="ordered locus">BT_4066</name>
</gene>
<keyword id="KW-0004">4Fe-4S</keyword>
<keyword id="KW-0997">Cell inner membrane</keyword>
<keyword id="KW-1003">Cell membrane</keyword>
<keyword id="KW-0408">Iron</keyword>
<keyword id="KW-0411">Iron-sulfur</keyword>
<keyword id="KW-0472">Membrane</keyword>
<keyword id="KW-0479">Metal-binding</keyword>
<keyword id="KW-0520">NAD</keyword>
<keyword id="KW-0874">Quinone</keyword>
<keyword id="KW-1185">Reference proteome</keyword>
<keyword id="KW-1278">Translocase</keyword>
<keyword id="KW-0813">Transport</keyword>
<evidence type="ECO:0000255" key="1">
    <source>
        <dbReference type="HAMAP-Rule" id="MF_01356"/>
    </source>
</evidence>
<sequence length="197" mass="22077">MEITKKPKIKSIPYDEFIDNESLEKLVKELNTGGANVFLGVLDDLVNWGRSNSLWPLTFATSCCGIEFMALGAARYDMARFGFEVARASPRQADMIMVCGTITNKMAPVLKRLYDQMPDPKYVVAVGGCAVSGGPFKKSYHVLNGVDKILPVDVYIPGCPPRPEAFYYGMMQLQRKVKIEKFFGGTNRKEKKPEFMK</sequence>
<name>NUOB_BACTN</name>
<protein>
    <recommendedName>
        <fullName evidence="1">NADH-quinone oxidoreductase subunit B</fullName>
        <ecNumber evidence="1">7.1.1.-</ecNumber>
    </recommendedName>
    <alternativeName>
        <fullName evidence="1">NADH dehydrogenase I subunit B</fullName>
    </alternativeName>
    <alternativeName>
        <fullName evidence="1">NDH-1 subunit B</fullName>
    </alternativeName>
</protein>
<reference key="1">
    <citation type="journal article" date="2003" name="Science">
        <title>A genomic view of the human-Bacteroides thetaiotaomicron symbiosis.</title>
        <authorList>
            <person name="Xu J."/>
            <person name="Bjursell M.K."/>
            <person name="Himrod J."/>
            <person name="Deng S."/>
            <person name="Carmichael L.K."/>
            <person name="Chiang H.C."/>
            <person name="Hooper L.V."/>
            <person name="Gordon J.I."/>
        </authorList>
    </citation>
    <scope>NUCLEOTIDE SEQUENCE [LARGE SCALE GENOMIC DNA]</scope>
    <source>
        <strain>ATCC 29148 / DSM 2079 / JCM 5827 / CCUG 10774 / NCTC 10582 / VPI-5482 / E50</strain>
    </source>
</reference>
<accession>Q8A0F5</accession>
<comment type="function">
    <text evidence="1">NDH-1 shuttles electrons from NADH, via FMN and iron-sulfur (Fe-S) centers, to quinones in the respiratory chain. The immediate electron acceptor for the enzyme in this species is believed to be a menaquinone. Couples the redox reaction to proton translocation (for every two electrons transferred, four hydrogen ions are translocated across the cytoplasmic membrane), and thus conserves the redox energy in a proton gradient.</text>
</comment>
<comment type="catalytic activity">
    <reaction evidence="1">
        <text>a quinone + NADH + 5 H(+)(in) = a quinol + NAD(+) + 4 H(+)(out)</text>
        <dbReference type="Rhea" id="RHEA:57888"/>
        <dbReference type="ChEBI" id="CHEBI:15378"/>
        <dbReference type="ChEBI" id="CHEBI:24646"/>
        <dbReference type="ChEBI" id="CHEBI:57540"/>
        <dbReference type="ChEBI" id="CHEBI:57945"/>
        <dbReference type="ChEBI" id="CHEBI:132124"/>
    </reaction>
</comment>
<comment type="cofactor">
    <cofactor evidence="1">
        <name>[4Fe-4S] cluster</name>
        <dbReference type="ChEBI" id="CHEBI:49883"/>
    </cofactor>
    <text evidence="1">Binds 1 [4Fe-4S] cluster.</text>
</comment>
<comment type="subunit">
    <text evidence="1">NDH-1 is composed of 14 different subunits. Subunits NuoB, C, D, E, F, and G constitute the peripheral sector of the complex.</text>
</comment>
<comment type="subcellular location">
    <subcellularLocation>
        <location evidence="1">Cell inner membrane</location>
        <topology evidence="1">Peripheral membrane protein</topology>
        <orientation evidence="1">Cytoplasmic side</orientation>
    </subcellularLocation>
</comment>
<comment type="similarity">
    <text evidence="1">Belongs to the complex I 20 kDa subunit family.</text>
</comment>
<organism>
    <name type="scientific">Bacteroides thetaiotaomicron (strain ATCC 29148 / DSM 2079 / JCM 5827 / CCUG 10774 / NCTC 10582 / VPI-5482 / E50)</name>
    <dbReference type="NCBI Taxonomy" id="226186"/>
    <lineage>
        <taxon>Bacteria</taxon>
        <taxon>Pseudomonadati</taxon>
        <taxon>Bacteroidota</taxon>
        <taxon>Bacteroidia</taxon>
        <taxon>Bacteroidales</taxon>
        <taxon>Bacteroidaceae</taxon>
        <taxon>Bacteroides</taxon>
    </lineage>
</organism>